<comment type="function">
    <text evidence="1">Major capsid protein that self-associates to form 240 hexon trimers, each in the shape of a hexagon, building most of the pseudo T=25 capsid. Assembled into trimeric units with the help of the chaperone shutoff protein. Transported by pre-protein VI to the nucleus where it associates with other structural proteins to form an empty capsid. Might be involved, through its interaction with host dyneins, in the intracellular microtubule-dependent transport of incoming viral capsid to the nucleus.</text>
</comment>
<comment type="subunit">
    <text evidence="1">Homotrimer. Interacts with the capsid vertex protein; this interaction binds the peripentonal hexons to the neighboring penton base. Interacts with the hexon-linking protein; this interaction tethers the hexons surrounding the penton to those situated in the central plate of the facet. Interacts with the hexon-interlacing protein; this interaction lashes the hexons together. Interacts with host dyneins DYNC1LI1 and DYNC1I2; this interaction might be involved in intracellular microtubule-dependent transport of incoming viral capsid. Interacts with the shutoff protein; this interaction allows folding and formation of hexons trimers. Interacts with pre-protein VI; this interaction probably allows nuclear import of hexon trimers and possibly pre-capsid assembly.</text>
</comment>
<comment type="subcellular location">
    <subcellularLocation>
        <location evidence="1">Virion</location>
    </subcellularLocation>
    <subcellularLocation>
        <location evidence="1">Host nucleus</location>
    </subcellularLocation>
    <text evidence="1">Forms the capsid icosahedric shell. Present in 720 copies per virion, assembled in 240 trimers.</text>
</comment>
<comment type="induction">
    <text evidence="1">Expressed in the late phase of the viral replicative cycle.</text>
</comment>
<comment type="miscellaneous">
    <text evidence="1">All late proteins expressed from the major late promoter are produced by alternative splicing and alternative polyadenylation of the same gene giving rise to non-overlapping ORFs. A leader sequence is present in the N-terminus of all these mRNAs and is recognized by the viral shutoff protein to provide expression although conventional translation via ribosome scanning from the cap has been shut off in the host cell.</text>
</comment>
<comment type="similarity">
    <text evidence="1 2">Belongs to the adenoviridae hexon protein family.</text>
</comment>
<sequence length="925" mass="103976">MATPSMMPQWSYMHIAGQDASEYLSPGLVQFARATDTYFSLGNKFRNPTVAPTHDVTTDRSQRLTLRFVPVDREDTAYSYKVRFTLAVGDNRVLDMASTYFDIRGVLDRGPSFKPYSGTAYNSLAPKTAPNPCEWKDNNKIKVRGQAPFIGTNINKDNGIQIGTDTTNQPIYADKTYQPEPQVGQTQWNSEVGAAQKVAGRVLKDTTPMLPCYGSYAKPTNEKGGQASLITNGTDQTLTSDVNLQFFALPSTPNEPKAVLYAENVSIEAPDTHLVYKPDVAQGTISSADLLTQQAAPNRPNYIGFRDNFIGLMYYNSTGNMGVLAGQASQLNAVVDLQDRNTELSYQLMLDALGDRSRYFSMWNQAVDSYDPDVRIIENHGVEDELPNYCFPLGGSAATDTYSGIKANGQTWTADDNYADRGAEIESGNIFAMEINLAANLWRSFLYSNVALYLPDSYKITPDNITLPENKNTYAYMNGRVAVPSALDTYVNIGARWSPDPMDNVNPFNHHRNAGLRYRSMLLGNGRYVPFHIQVPQKFFAIKNLLLLPGSYTYEWNFRKDVNMILQSSLGNDLRVDGASVRFDSINLYANFFPMAHNTASTLEAMLRNDTNDQSFNDYLCAANMLYPIPSNATSVPISIPSRNWAAFRGWSFTRLKTKETPSLGSGFDPYFTYSGSVPYLDGTFYLNHTFKKVSIMFDSSVSWPGNDRLLTPNEFEIKRTVDGEGYNVAQCNMTKDWFLIQMLSHYNIGYQGFYVPESYKDRMYSFFRNFQPMSRQVVNTTTYKEYQNVTLPFQHNNSGFVGYMGPTMREGQAYPANYPYPLIGQTAVPSLTQKKFLCDRTMWRIPFSSNFMSMGALTDLGQNMLYANSAHALDMTFEVDPMDEPTLLYVLFEVFDVVRIHQPHRGVIEAVYLRTPFSAGNATT</sequence>
<organism>
    <name type="scientific">Human adenovirus F serotype 41</name>
    <name type="common">HAdV-41</name>
    <name type="synonym">Human adenovirus 41</name>
    <dbReference type="NCBI Taxonomy" id="10524"/>
    <lineage>
        <taxon>Viruses</taxon>
        <taxon>Varidnaviria</taxon>
        <taxon>Bamfordvirae</taxon>
        <taxon>Preplasmiviricota</taxon>
        <taxon>Tectiliviricetes</taxon>
        <taxon>Rowavirales</taxon>
        <taxon>Adenoviridae</taxon>
        <taxon>Mastadenovirus</taxon>
        <taxon>Human mastadenovirus F</taxon>
    </lineage>
</organism>
<organismHost>
    <name type="scientific">Homo sapiens</name>
    <name type="common">Human</name>
    <dbReference type="NCBI Taxonomy" id="9606"/>
</organismHost>
<proteinExistence type="evidence at protein level"/>
<feature type="initiator methionine" description="Removed; by host" evidence="1">
    <location>
        <position position="1"/>
    </location>
</feature>
<feature type="chain" id="PRO_0000221825" description="Hexon protein" evidence="1">
    <location>
        <begin position="2"/>
        <end position="925"/>
    </location>
</feature>
<feature type="site" description="Involved in interaction with pre-protein VI" evidence="1">
    <location>
        <position position="750"/>
    </location>
</feature>
<feature type="modified residue" description="N-acetylalanine; by host" evidence="1">
    <location>
        <position position="2"/>
    </location>
</feature>
<feature type="modified residue" description="Phosphotyrosine; by host" evidence="1">
    <location>
        <position position="913"/>
    </location>
</feature>
<keyword id="KW-0002">3D-structure</keyword>
<keyword id="KW-0007">Acetylation</keyword>
<keyword id="KW-0167">Capsid protein</keyword>
<keyword id="KW-1176">Cytoplasmic inwards viral transport</keyword>
<keyword id="KW-1048">Host nucleus</keyword>
<keyword id="KW-0945">Host-virus interaction</keyword>
<keyword id="KW-0426">Late protein</keyword>
<keyword id="KW-1177">Microtubular inwards viral transport</keyword>
<keyword id="KW-0597">Phosphoprotein</keyword>
<keyword id="KW-1148">T=25 icosahedral capsid protein</keyword>
<keyword id="KW-0946">Virion</keyword>
<keyword id="KW-1160">Virus entry into host cell</keyword>
<reference key="1">
    <citation type="journal article" date="1988" name="J. Gen. Virol.">
        <title>DNA sequence of the adenovirus type 41 hexon gene and predicted structure of the protein.</title>
        <authorList>
            <person name="Toogood C.I.A."/>
            <person name="Hay R.T."/>
        </authorList>
    </citation>
    <scope>NUCLEOTIDE SEQUENCE [GENOMIC DNA]</scope>
</reference>
<reference key="2">
    <citation type="submission" date="1990-02" db="EMBL/GenBank/DDBJ databases">
        <authorList>
            <person name="Toogood C.I.A."/>
            <person name="Murali R."/>
            <person name="Burnett M."/>
            <person name="Hay R.T."/>
        </authorList>
    </citation>
    <scope>NUCLEOTIDE SEQUENCE [GENOMIC DNA]</scope>
    <source>
        <strain>Tak</strain>
    </source>
</reference>
<reference key="3">
    <citation type="journal article" date="1988" name="Virology">
        <title>The genes encoding the DNA binding protein and the 23K protease of adenovirus types 40 and 41.</title>
        <authorList>
            <person name="Vos H.L."/>
            <person name="der Lee F.M."/>
            <person name="Reemst A.M.C.B."/>
            <person name="van Loon A.E."/>
            <person name="Sussenbach J.S."/>
        </authorList>
    </citation>
    <scope>NUCLEOTIDE SEQUENCE [GENOMIC DNA] OF 684-756 AND 814-925</scope>
</reference>
<protein>
    <recommendedName>
        <fullName evidence="1">Hexon protein</fullName>
        <shortName evidence="1">CP-H</shortName>
    </recommendedName>
    <alternativeName>
        <fullName evidence="1">Protein II</fullName>
    </alternativeName>
</protein>
<dbReference type="EMBL" id="D13781">
    <property type="status" value="NOT_ANNOTATED_CDS"/>
    <property type="molecule type" value="Genomic_DNA"/>
</dbReference>
<dbReference type="EMBL" id="AH002308">
    <property type="protein sequence ID" value="AAA42460.1"/>
    <property type="molecule type" value="Genomic_DNA"/>
</dbReference>
<dbReference type="EMBL" id="X51783">
    <property type="protein sequence ID" value="CAA36079.1"/>
    <property type="molecule type" value="Genomic_DNA"/>
</dbReference>
<dbReference type="EMBL" id="AH002308">
    <property type="protein sequence ID" value="AAA42461.1"/>
    <property type="molecule type" value="Genomic_DNA"/>
</dbReference>
<dbReference type="PIR" id="A31040">
    <property type="entry name" value="HXAD41"/>
</dbReference>
<dbReference type="PDB" id="6YBA">
    <property type="method" value="EM"/>
    <property type="resolution" value="4.00 A"/>
    <property type="chains" value="A/B/C/D/E/F/G/H/I/J/K/L=1-925"/>
</dbReference>
<dbReference type="PDB" id="6Z7N">
    <property type="method" value="EM"/>
    <property type="resolution" value="3.77 A"/>
    <property type="chains" value="A/B/C/D/E/F/G/H/I/J/K/L=1-925"/>
</dbReference>
<dbReference type="PDBsum" id="6YBA"/>
<dbReference type="PDBsum" id="6Z7N"/>
<dbReference type="EMDB" id="EMD-11108"/>
<dbReference type="SMR" id="P11820"/>
<dbReference type="GO" id="GO:0043657">
    <property type="term" value="C:host cell"/>
    <property type="evidence" value="ECO:0007669"/>
    <property type="project" value="GOC"/>
</dbReference>
<dbReference type="GO" id="GO:0042025">
    <property type="term" value="C:host cell nucleus"/>
    <property type="evidence" value="ECO:0007669"/>
    <property type="project" value="UniProtKB-SubCell"/>
</dbReference>
<dbReference type="GO" id="GO:0039623">
    <property type="term" value="C:T=25 icosahedral viral capsid"/>
    <property type="evidence" value="ECO:0007669"/>
    <property type="project" value="UniProtKB-UniRule"/>
</dbReference>
<dbReference type="GO" id="GO:0005198">
    <property type="term" value="F:structural molecule activity"/>
    <property type="evidence" value="ECO:0007669"/>
    <property type="project" value="UniProtKB-UniRule"/>
</dbReference>
<dbReference type="GO" id="GO:0075521">
    <property type="term" value="P:microtubule-dependent intracellular transport of viral material towards nucleus"/>
    <property type="evidence" value="ECO:0007669"/>
    <property type="project" value="UniProtKB-UniRule"/>
</dbReference>
<dbReference type="GO" id="GO:0046718">
    <property type="term" value="P:symbiont entry into host cell"/>
    <property type="evidence" value="ECO:0007669"/>
    <property type="project" value="UniProtKB-UniRule"/>
</dbReference>
<dbReference type="FunFam" id="2.70.9.10:FF:000001">
    <property type="entry name" value="Hexon protein"/>
    <property type="match status" value="1"/>
</dbReference>
<dbReference type="Gene3D" id="2.70.9.10">
    <property type="entry name" value="Adenovirus Type 2 Hexon, domain 4"/>
    <property type="match status" value="2"/>
</dbReference>
<dbReference type="Gene3D" id="3.90.39.10">
    <property type="entry name" value="Hexon Major Viral Coat Protein, domain 2"/>
    <property type="match status" value="1"/>
</dbReference>
<dbReference type="Gene3D" id="3.90.249.10">
    <property type="entry name" value="Hexon Major Viral Coat Protein, domain 3"/>
    <property type="match status" value="2"/>
</dbReference>
<dbReference type="HAMAP" id="MF_04051">
    <property type="entry name" value="ADV_CAPSH"/>
    <property type="match status" value="1"/>
</dbReference>
<dbReference type="InterPro" id="IPR016108">
    <property type="entry name" value="Adenovirus_Pll_hexon_C"/>
</dbReference>
<dbReference type="InterPro" id="IPR016107">
    <property type="entry name" value="Adenovirus_Pll_hexon_N"/>
</dbReference>
<dbReference type="InterPro" id="IPR044942">
    <property type="entry name" value="Adenovirus_Pll_hexon_sub2"/>
</dbReference>
<dbReference type="InterPro" id="IPR016110">
    <property type="entry name" value="Adenovirus_Pll_hexon_sub3"/>
</dbReference>
<dbReference type="InterPro" id="IPR037542">
    <property type="entry name" value="ADV_hexon"/>
</dbReference>
<dbReference type="InterPro" id="IPR016112">
    <property type="entry name" value="VP_dsDNA_II"/>
</dbReference>
<dbReference type="Pfam" id="PF01065">
    <property type="entry name" value="Adeno_hexon"/>
    <property type="match status" value="1"/>
</dbReference>
<dbReference type="Pfam" id="PF03678">
    <property type="entry name" value="Adeno_hexon_C"/>
    <property type="match status" value="1"/>
</dbReference>
<dbReference type="SUPFAM" id="SSF49749">
    <property type="entry name" value="Group II dsDNA viruses VP"/>
    <property type="match status" value="2"/>
</dbReference>
<name>CAPSH_ADE41</name>
<accession>P11820</accession>
<accession>Q64880</accession>
<evidence type="ECO:0000255" key="1">
    <source>
        <dbReference type="HAMAP-Rule" id="MF_04051"/>
    </source>
</evidence>
<evidence type="ECO:0000305" key="2"/>
<gene>
    <name evidence="1" type="primary">L3</name>
</gene>